<organism>
    <name type="scientific">Rhodococcus opacus (strain B4)</name>
    <dbReference type="NCBI Taxonomy" id="632772"/>
    <lineage>
        <taxon>Bacteria</taxon>
        <taxon>Bacillati</taxon>
        <taxon>Actinomycetota</taxon>
        <taxon>Actinomycetes</taxon>
        <taxon>Mycobacteriales</taxon>
        <taxon>Nocardiaceae</taxon>
        <taxon>Rhodococcus</taxon>
    </lineage>
</organism>
<reference key="1">
    <citation type="submission" date="2009-03" db="EMBL/GenBank/DDBJ databases">
        <title>Comparison of the complete genome sequences of Rhodococcus erythropolis PR4 and Rhodococcus opacus B4.</title>
        <authorList>
            <person name="Takarada H."/>
            <person name="Sekine M."/>
            <person name="Hosoyama A."/>
            <person name="Yamada R."/>
            <person name="Fujisawa T."/>
            <person name="Omata S."/>
            <person name="Shimizu A."/>
            <person name="Tsukatani N."/>
            <person name="Tanikawa S."/>
            <person name="Fujita N."/>
            <person name="Harayama S."/>
        </authorList>
    </citation>
    <scope>NUCLEOTIDE SEQUENCE [LARGE SCALE GENOMIC DNA]</scope>
    <source>
        <strain>B4</strain>
    </source>
</reference>
<feature type="chain" id="PRO_1000146913" description="Co-chaperonin GroES">
    <location>
        <begin position="1"/>
        <end position="99"/>
    </location>
</feature>
<proteinExistence type="inferred from homology"/>
<dbReference type="EMBL" id="AP011115">
    <property type="protein sequence ID" value="BAH54496.1"/>
    <property type="molecule type" value="Genomic_DNA"/>
</dbReference>
<dbReference type="RefSeq" id="WP_003940763.1">
    <property type="nucleotide sequence ID" value="NC_012522.1"/>
</dbReference>
<dbReference type="SMR" id="C1B075"/>
<dbReference type="STRING" id="632772.ROP_62490"/>
<dbReference type="GeneID" id="93803243"/>
<dbReference type="KEGG" id="rop:ROP_62490"/>
<dbReference type="PATRIC" id="fig|632772.20.peg.6526"/>
<dbReference type="HOGENOM" id="CLU_132825_2_0_11"/>
<dbReference type="OrthoDB" id="9806791at2"/>
<dbReference type="Proteomes" id="UP000002212">
    <property type="component" value="Chromosome"/>
</dbReference>
<dbReference type="GO" id="GO:0005737">
    <property type="term" value="C:cytoplasm"/>
    <property type="evidence" value="ECO:0007669"/>
    <property type="project" value="UniProtKB-SubCell"/>
</dbReference>
<dbReference type="GO" id="GO:0005524">
    <property type="term" value="F:ATP binding"/>
    <property type="evidence" value="ECO:0007669"/>
    <property type="project" value="InterPro"/>
</dbReference>
<dbReference type="GO" id="GO:0046872">
    <property type="term" value="F:metal ion binding"/>
    <property type="evidence" value="ECO:0007669"/>
    <property type="project" value="TreeGrafter"/>
</dbReference>
<dbReference type="GO" id="GO:0044183">
    <property type="term" value="F:protein folding chaperone"/>
    <property type="evidence" value="ECO:0007669"/>
    <property type="project" value="InterPro"/>
</dbReference>
<dbReference type="GO" id="GO:0051087">
    <property type="term" value="F:protein-folding chaperone binding"/>
    <property type="evidence" value="ECO:0007669"/>
    <property type="project" value="TreeGrafter"/>
</dbReference>
<dbReference type="GO" id="GO:0051082">
    <property type="term" value="F:unfolded protein binding"/>
    <property type="evidence" value="ECO:0007669"/>
    <property type="project" value="TreeGrafter"/>
</dbReference>
<dbReference type="GO" id="GO:0051085">
    <property type="term" value="P:chaperone cofactor-dependent protein refolding"/>
    <property type="evidence" value="ECO:0007669"/>
    <property type="project" value="TreeGrafter"/>
</dbReference>
<dbReference type="CDD" id="cd00320">
    <property type="entry name" value="cpn10"/>
    <property type="match status" value="1"/>
</dbReference>
<dbReference type="FunFam" id="2.30.33.40:FF:000001">
    <property type="entry name" value="10 kDa chaperonin"/>
    <property type="match status" value="1"/>
</dbReference>
<dbReference type="Gene3D" id="2.30.33.40">
    <property type="entry name" value="GroES chaperonin"/>
    <property type="match status" value="1"/>
</dbReference>
<dbReference type="HAMAP" id="MF_00580">
    <property type="entry name" value="CH10"/>
    <property type="match status" value="1"/>
</dbReference>
<dbReference type="InterPro" id="IPR020818">
    <property type="entry name" value="Chaperonin_GroES"/>
</dbReference>
<dbReference type="InterPro" id="IPR037124">
    <property type="entry name" value="Chaperonin_GroES_sf"/>
</dbReference>
<dbReference type="InterPro" id="IPR018369">
    <property type="entry name" value="Chaprnonin_Cpn10_CS"/>
</dbReference>
<dbReference type="InterPro" id="IPR011032">
    <property type="entry name" value="GroES-like_sf"/>
</dbReference>
<dbReference type="NCBIfam" id="NF001530">
    <property type="entry name" value="PRK00364.1-6"/>
    <property type="match status" value="1"/>
</dbReference>
<dbReference type="NCBIfam" id="NF001531">
    <property type="entry name" value="PRK00364.2-2"/>
    <property type="match status" value="1"/>
</dbReference>
<dbReference type="NCBIfam" id="NF001533">
    <property type="entry name" value="PRK00364.2-4"/>
    <property type="match status" value="1"/>
</dbReference>
<dbReference type="NCBIfam" id="NF001534">
    <property type="entry name" value="PRK00364.2-5"/>
    <property type="match status" value="1"/>
</dbReference>
<dbReference type="PANTHER" id="PTHR10772">
    <property type="entry name" value="10 KDA HEAT SHOCK PROTEIN"/>
    <property type="match status" value="1"/>
</dbReference>
<dbReference type="PANTHER" id="PTHR10772:SF58">
    <property type="entry name" value="CO-CHAPERONIN GROES"/>
    <property type="match status" value="1"/>
</dbReference>
<dbReference type="Pfam" id="PF00166">
    <property type="entry name" value="Cpn10"/>
    <property type="match status" value="1"/>
</dbReference>
<dbReference type="PRINTS" id="PR00297">
    <property type="entry name" value="CHAPERONIN10"/>
</dbReference>
<dbReference type="SMART" id="SM00883">
    <property type="entry name" value="Cpn10"/>
    <property type="match status" value="1"/>
</dbReference>
<dbReference type="SUPFAM" id="SSF50129">
    <property type="entry name" value="GroES-like"/>
    <property type="match status" value="1"/>
</dbReference>
<dbReference type="PROSITE" id="PS00681">
    <property type="entry name" value="CHAPERONINS_CPN10"/>
    <property type="match status" value="1"/>
</dbReference>
<sequence length="99" mass="10576">MASVNIKPLEDKILVQANEAETTTASGLVIPDTAKEKPQEGTVVAVGEGRVNEQGNRIPVDVKEGDTVIYSKYGGTEIKYAGQEYLILSARDVLAVVSK</sequence>
<comment type="function">
    <text evidence="1">Together with the chaperonin GroEL, plays an essential role in assisting protein folding. The GroEL-GroES system forms a nano-cage that allows encapsulation of the non-native substrate proteins and provides a physical environment optimized to promote and accelerate protein folding. GroES binds to the apical surface of the GroEL ring, thereby capping the opening of the GroEL channel.</text>
</comment>
<comment type="subunit">
    <text evidence="1">Heptamer of 7 subunits arranged in a ring. Interacts with the chaperonin GroEL.</text>
</comment>
<comment type="subcellular location">
    <subcellularLocation>
        <location evidence="1">Cytoplasm</location>
    </subcellularLocation>
</comment>
<comment type="similarity">
    <text evidence="1">Belongs to the GroES chaperonin family.</text>
</comment>
<protein>
    <recommendedName>
        <fullName evidence="1">Co-chaperonin GroES</fullName>
    </recommendedName>
    <alternativeName>
        <fullName evidence="1">10 kDa chaperonin</fullName>
    </alternativeName>
    <alternativeName>
        <fullName evidence="1">Chaperonin-10</fullName>
        <shortName evidence="1">Cpn10</shortName>
    </alternativeName>
</protein>
<keyword id="KW-0143">Chaperone</keyword>
<keyword id="KW-0963">Cytoplasm</keyword>
<evidence type="ECO:0000255" key="1">
    <source>
        <dbReference type="HAMAP-Rule" id="MF_00580"/>
    </source>
</evidence>
<accession>C1B075</accession>
<gene>
    <name evidence="1" type="primary">groES</name>
    <name evidence="1" type="synonym">groS</name>
    <name type="ordered locus">ROP_62490</name>
</gene>
<name>CH10_RHOOB</name>